<name>SECA_CAMC1</name>
<gene>
    <name evidence="1" type="primary">secA</name>
    <name type="ordered locus">Ccon26_08000</name>
    <name type="ORF">CCC13826_1072</name>
</gene>
<accession>A7ZD16</accession>
<dbReference type="EC" id="7.4.2.8" evidence="1"/>
<dbReference type="EMBL" id="CP000792">
    <property type="protein sequence ID" value="EAT97857.1"/>
    <property type="molecule type" value="Genomic_DNA"/>
</dbReference>
<dbReference type="RefSeq" id="WP_012001622.1">
    <property type="nucleotide sequence ID" value="NC_009802.2"/>
</dbReference>
<dbReference type="SMR" id="A7ZD16"/>
<dbReference type="STRING" id="360104.CCC13826_1072"/>
<dbReference type="KEGG" id="cco:CCC13826_1072"/>
<dbReference type="eggNOG" id="COG0653">
    <property type="taxonomic scope" value="Bacteria"/>
</dbReference>
<dbReference type="HOGENOM" id="CLU_005314_3_0_7"/>
<dbReference type="OrthoDB" id="9805579at2"/>
<dbReference type="Proteomes" id="UP000001121">
    <property type="component" value="Chromosome"/>
</dbReference>
<dbReference type="GO" id="GO:0031522">
    <property type="term" value="C:cell envelope Sec protein transport complex"/>
    <property type="evidence" value="ECO:0007669"/>
    <property type="project" value="TreeGrafter"/>
</dbReference>
<dbReference type="GO" id="GO:0005829">
    <property type="term" value="C:cytosol"/>
    <property type="evidence" value="ECO:0007669"/>
    <property type="project" value="TreeGrafter"/>
</dbReference>
<dbReference type="GO" id="GO:0005886">
    <property type="term" value="C:plasma membrane"/>
    <property type="evidence" value="ECO:0007669"/>
    <property type="project" value="UniProtKB-SubCell"/>
</dbReference>
<dbReference type="GO" id="GO:0005524">
    <property type="term" value="F:ATP binding"/>
    <property type="evidence" value="ECO:0007669"/>
    <property type="project" value="UniProtKB-UniRule"/>
</dbReference>
<dbReference type="GO" id="GO:0046872">
    <property type="term" value="F:metal ion binding"/>
    <property type="evidence" value="ECO:0007669"/>
    <property type="project" value="UniProtKB-KW"/>
</dbReference>
<dbReference type="GO" id="GO:0008564">
    <property type="term" value="F:protein-exporting ATPase activity"/>
    <property type="evidence" value="ECO:0007669"/>
    <property type="project" value="UniProtKB-EC"/>
</dbReference>
<dbReference type="GO" id="GO:0065002">
    <property type="term" value="P:intracellular protein transmembrane transport"/>
    <property type="evidence" value="ECO:0007669"/>
    <property type="project" value="UniProtKB-UniRule"/>
</dbReference>
<dbReference type="GO" id="GO:0017038">
    <property type="term" value="P:protein import"/>
    <property type="evidence" value="ECO:0007669"/>
    <property type="project" value="InterPro"/>
</dbReference>
<dbReference type="GO" id="GO:0006605">
    <property type="term" value="P:protein targeting"/>
    <property type="evidence" value="ECO:0007669"/>
    <property type="project" value="UniProtKB-UniRule"/>
</dbReference>
<dbReference type="GO" id="GO:0043952">
    <property type="term" value="P:protein transport by the Sec complex"/>
    <property type="evidence" value="ECO:0007669"/>
    <property type="project" value="TreeGrafter"/>
</dbReference>
<dbReference type="CDD" id="cd17928">
    <property type="entry name" value="DEXDc_SecA"/>
    <property type="match status" value="1"/>
</dbReference>
<dbReference type="CDD" id="cd18803">
    <property type="entry name" value="SF2_C_secA"/>
    <property type="match status" value="1"/>
</dbReference>
<dbReference type="FunFam" id="3.40.50.300:FF:000429">
    <property type="entry name" value="Preprotein translocase subunit SecA"/>
    <property type="match status" value="1"/>
</dbReference>
<dbReference type="FunFam" id="3.90.1440.10:FF:000002">
    <property type="entry name" value="Protein translocase subunit SecA"/>
    <property type="match status" value="1"/>
</dbReference>
<dbReference type="Gene3D" id="1.10.3060.10">
    <property type="entry name" value="Helical scaffold and wing domains of SecA"/>
    <property type="match status" value="1"/>
</dbReference>
<dbReference type="Gene3D" id="3.40.50.300">
    <property type="entry name" value="P-loop containing nucleotide triphosphate hydrolases"/>
    <property type="match status" value="3"/>
</dbReference>
<dbReference type="Gene3D" id="3.90.1440.10">
    <property type="entry name" value="SecA, preprotein cross-linking domain"/>
    <property type="match status" value="1"/>
</dbReference>
<dbReference type="HAMAP" id="MF_01382">
    <property type="entry name" value="SecA"/>
    <property type="match status" value="1"/>
</dbReference>
<dbReference type="InterPro" id="IPR014001">
    <property type="entry name" value="Helicase_ATP-bd"/>
</dbReference>
<dbReference type="InterPro" id="IPR001650">
    <property type="entry name" value="Helicase_C-like"/>
</dbReference>
<dbReference type="InterPro" id="IPR027417">
    <property type="entry name" value="P-loop_NTPase"/>
</dbReference>
<dbReference type="InterPro" id="IPR004027">
    <property type="entry name" value="SEC_C_motif"/>
</dbReference>
<dbReference type="InterPro" id="IPR000185">
    <property type="entry name" value="SecA"/>
</dbReference>
<dbReference type="InterPro" id="IPR011115">
    <property type="entry name" value="SecA_DEAD"/>
</dbReference>
<dbReference type="InterPro" id="IPR014018">
    <property type="entry name" value="SecA_motor_DEAD"/>
</dbReference>
<dbReference type="InterPro" id="IPR011130">
    <property type="entry name" value="SecA_preprotein_X-link_dom"/>
</dbReference>
<dbReference type="InterPro" id="IPR044722">
    <property type="entry name" value="SecA_SF2_C"/>
</dbReference>
<dbReference type="InterPro" id="IPR011116">
    <property type="entry name" value="SecA_Wing/Scaffold"/>
</dbReference>
<dbReference type="InterPro" id="IPR036266">
    <property type="entry name" value="SecA_Wing/Scaffold_sf"/>
</dbReference>
<dbReference type="InterPro" id="IPR036670">
    <property type="entry name" value="SecA_X-link_sf"/>
</dbReference>
<dbReference type="NCBIfam" id="NF006630">
    <property type="entry name" value="PRK09200.1"/>
    <property type="match status" value="1"/>
</dbReference>
<dbReference type="NCBIfam" id="NF009538">
    <property type="entry name" value="PRK12904.1"/>
    <property type="match status" value="1"/>
</dbReference>
<dbReference type="NCBIfam" id="TIGR00963">
    <property type="entry name" value="secA"/>
    <property type="match status" value="1"/>
</dbReference>
<dbReference type="PANTHER" id="PTHR30612:SF0">
    <property type="entry name" value="CHLOROPLAST PROTEIN-TRANSPORTING ATPASE"/>
    <property type="match status" value="1"/>
</dbReference>
<dbReference type="PANTHER" id="PTHR30612">
    <property type="entry name" value="SECA INNER MEMBRANE COMPONENT OF SEC PROTEIN SECRETION SYSTEM"/>
    <property type="match status" value="1"/>
</dbReference>
<dbReference type="Pfam" id="PF21090">
    <property type="entry name" value="P-loop_SecA"/>
    <property type="match status" value="1"/>
</dbReference>
<dbReference type="Pfam" id="PF02810">
    <property type="entry name" value="SEC-C"/>
    <property type="match status" value="1"/>
</dbReference>
<dbReference type="Pfam" id="PF07517">
    <property type="entry name" value="SecA_DEAD"/>
    <property type="match status" value="1"/>
</dbReference>
<dbReference type="Pfam" id="PF01043">
    <property type="entry name" value="SecA_PP_bind"/>
    <property type="match status" value="1"/>
</dbReference>
<dbReference type="Pfam" id="PF07516">
    <property type="entry name" value="SecA_SW"/>
    <property type="match status" value="1"/>
</dbReference>
<dbReference type="PRINTS" id="PR00906">
    <property type="entry name" value="SECA"/>
</dbReference>
<dbReference type="SMART" id="SM00957">
    <property type="entry name" value="SecA_DEAD"/>
    <property type="match status" value="1"/>
</dbReference>
<dbReference type="SMART" id="SM00958">
    <property type="entry name" value="SecA_PP_bind"/>
    <property type="match status" value="1"/>
</dbReference>
<dbReference type="SUPFAM" id="SSF81886">
    <property type="entry name" value="Helical scaffold and wing domains of SecA"/>
    <property type="match status" value="1"/>
</dbReference>
<dbReference type="SUPFAM" id="SSF52540">
    <property type="entry name" value="P-loop containing nucleoside triphosphate hydrolases"/>
    <property type="match status" value="2"/>
</dbReference>
<dbReference type="SUPFAM" id="SSF81767">
    <property type="entry name" value="Pre-protein crosslinking domain of SecA"/>
    <property type="match status" value="1"/>
</dbReference>
<dbReference type="PROSITE" id="PS51196">
    <property type="entry name" value="SECA_MOTOR_DEAD"/>
    <property type="match status" value="1"/>
</dbReference>
<feature type="chain" id="PRO_0000320761" description="Protein translocase subunit SecA">
    <location>
        <begin position="1"/>
        <end position="868"/>
    </location>
</feature>
<feature type="region of interest" description="Disordered" evidence="2">
    <location>
        <begin position="816"/>
        <end position="868"/>
    </location>
</feature>
<feature type="compositionally biased region" description="Polar residues" evidence="2">
    <location>
        <begin position="816"/>
        <end position="827"/>
    </location>
</feature>
<feature type="binding site" evidence="1">
    <location>
        <position position="88"/>
    </location>
    <ligand>
        <name>ATP</name>
        <dbReference type="ChEBI" id="CHEBI:30616"/>
    </ligand>
</feature>
<feature type="binding site" evidence="1">
    <location>
        <begin position="106"/>
        <end position="110"/>
    </location>
    <ligand>
        <name>ATP</name>
        <dbReference type="ChEBI" id="CHEBI:30616"/>
    </ligand>
</feature>
<feature type="binding site" evidence="1">
    <location>
        <position position="509"/>
    </location>
    <ligand>
        <name>ATP</name>
        <dbReference type="ChEBI" id="CHEBI:30616"/>
    </ligand>
</feature>
<feature type="binding site" evidence="1">
    <location>
        <position position="845"/>
    </location>
    <ligand>
        <name>Zn(2+)</name>
        <dbReference type="ChEBI" id="CHEBI:29105"/>
    </ligand>
</feature>
<feature type="binding site" evidence="1">
    <location>
        <position position="847"/>
    </location>
    <ligand>
        <name>Zn(2+)</name>
        <dbReference type="ChEBI" id="CHEBI:29105"/>
    </ligand>
</feature>
<feature type="binding site" evidence="1">
    <location>
        <position position="856"/>
    </location>
    <ligand>
        <name>Zn(2+)</name>
        <dbReference type="ChEBI" id="CHEBI:29105"/>
    </ligand>
</feature>
<feature type="binding site" evidence="1">
    <location>
        <position position="857"/>
    </location>
    <ligand>
        <name>Zn(2+)</name>
        <dbReference type="ChEBI" id="CHEBI:29105"/>
    </ligand>
</feature>
<protein>
    <recommendedName>
        <fullName evidence="1">Protein translocase subunit SecA</fullName>
        <ecNumber evidence="1">7.4.2.8</ecNumber>
    </recommendedName>
</protein>
<sequence>MISSVFRKIFGTKNDREVKKYIKRVAQINALEPTYEKMSDDELKIKFNELKAQVVEEKVTLDQILNDVFALVREASKRVLKMRHFDVQLIGGMVLNEGRIAEMKTGEGKTLVATLPVILNAMSGKGVHVVTVNDYLAKRDATQMGELYNFLGLSVDVILSGGYDDEVRQAAYNADITYGTNSEFGFDYLRDNMKFEAGQKVQRGHNFVIVDEVDSILIDEARTPLIISGPTNRTLDGYIRADQVAKQLTRGTPADPNMPGSKPTGDFIVDEKNRTIMITEAGISKAEKLFGVENLYNLENAVLSHHLDQALKAHNLFEKDVHYVVKDGEVVIVDEFTGRLSEGRRFSEGLHQALEAKEGVKIQEESQTLADTTYQNYFRMYKKLAGMTGTAQTEATEFSQIYNLEVISIPTNVPVKRIDQNDLIYKTQNEKFKAVIDEVKKAHEKGQPVLVGTASIERSEVLHEMLKKAGIPHSVLNAKNHEKEAEIIAQAGVKGAVTIATNMAGRGVDIRINDEVRDLGGLYIIGTERHESRRIDNQLRGRAGRQGDPGMSRFYLSLEDNLLRIFGSDRIKAIMDRLGIDEGESIESRMVTRAVENAQKKVESLHFEARKHLLEYDDVANEQRKTIYKYRDELLDKNYDMSEKIAQNRVEYATNLLDTAEIFHGGLKDDYDIKNLCSIILADCGEEIDESELKGLEYNELVEKIAQILEVRYNEKMSVLNEEQRKDIEKILYLQVLDNAWREHLYQMDILKTGIGLRGYNQKDPLVEYKKESYNLFMELVGRLKTESVKTLQIVRFKSREEQEEQARMMLEASQNAENEPLNYNNQGEDENFTPEKKIPRNAPCPCGSGKKYKDCHGKSGPKKGIFA</sequence>
<evidence type="ECO:0000255" key="1">
    <source>
        <dbReference type="HAMAP-Rule" id="MF_01382"/>
    </source>
</evidence>
<evidence type="ECO:0000256" key="2">
    <source>
        <dbReference type="SAM" id="MobiDB-lite"/>
    </source>
</evidence>
<keyword id="KW-0067">ATP-binding</keyword>
<keyword id="KW-0997">Cell inner membrane</keyword>
<keyword id="KW-1003">Cell membrane</keyword>
<keyword id="KW-0963">Cytoplasm</keyword>
<keyword id="KW-0472">Membrane</keyword>
<keyword id="KW-0479">Metal-binding</keyword>
<keyword id="KW-0547">Nucleotide-binding</keyword>
<keyword id="KW-0653">Protein transport</keyword>
<keyword id="KW-1278">Translocase</keyword>
<keyword id="KW-0811">Translocation</keyword>
<keyword id="KW-0813">Transport</keyword>
<keyword id="KW-0862">Zinc</keyword>
<reference key="1">
    <citation type="submission" date="2007-10" db="EMBL/GenBank/DDBJ databases">
        <title>Genome sequence of Campylobacter concisus 13826 isolated from human feces.</title>
        <authorList>
            <person name="Fouts D.E."/>
            <person name="Mongodin E.F."/>
            <person name="Puiu D."/>
            <person name="Sebastian Y."/>
            <person name="Miller W.G."/>
            <person name="Mandrell R.E."/>
            <person name="On S."/>
            <person name="Nelson K.E."/>
        </authorList>
    </citation>
    <scope>NUCLEOTIDE SEQUENCE [LARGE SCALE GENOMIC DNA]</scope>
    <source>
        <strain>13826</strain>
    </source>
</reference>
<comment type="function">
    <text evidence="1">Part of the Sec protein translocase complex. Interacts with the SecYEG preprotein conducting channel. Has a central role in coupling the hydrolysis of ATP to the transfer of proteins into and across the cell membrane, serving as an ATP-driven molecular motor driving the stepwise translocation of polypeptide chains across the membrane.</text>
</comment>
<comment type="catalytic activity">
    <reaction evidence="1">
        <text>ATP + H2O + cellular proteinSide 1 = ADP + phosphate + cellular proteinSide 2.</text>
        <dbReference type="EC" id="7.4.2.8"/>
    </reaction>
</comment>
<comment type="cofactor">
    <cofactor evidence="1">
        <name>Zn(2+)</name>
        <dbReference type="ChEBI" id="CHEBI:29105"/>
    </cofactor>
    <text evidence="1">May bind 1 zinc ion per subunit.</text>
</comment>
<comment type="subunit">
    <text evidence="1">Monomer and homodimer. Part of the essential Sec protein translocation apparatus which comprises SecA, SecYEG and auxiliary proteins SecDF-YajC and YidC.</text>
</comment>
<comment type="subcellular location">
    <subcellularLocation>
        <location evidence="1">Cell inner membrane</location>
        <topology evidence="1">Peripheral membrane protein</topology>
        <orientation evidence="1">Cytoplasmic side</orientation>
    </subcellularLocation>
    <subcellularLocation>
        <location evidence="1">Cytoplasm</location>
    </subcellularLocation>
    <text evidence="1">Distribution is 50-50.</text>
</comment>
<comment type="similarity">
    <text evidence="1">Belongs to the SecA family.</text>
</comment>
<proteinExistence type="inferred from homology"/>
<organism>
    <name type="scientific">Campylobacter concisus (strain 13826)</name>
    <dbReference type="NCBI Taxonomy" id="360104"/>
    <lineage>
        <taxon>Bacteria</taxon>
        <taxon>Pseudomonadati</taxon>
        <taxon>Campylobacterota</taxon>
        <taxon>Epsilonproteobacteria</taxon>
        <taxon>Campylobacterales</taxon>
        <taxon>Campylobacteraceae</taxon>
        <taxon>Campylobacter</taxon>
    </lineage>
</organism>